<name>NUOD2_SALTO</name>
<organism>
    <name type="scientific">Salinispora tropica (strain ATCC BAA-916 / DSM 44818 / JCM 13857 / NBRC 105044 / CNB-440)</name>
    <dbReference type="NCBI Taxonomy" id="369723"/>
    <lineage>
        <taxon>Bacteria</taxon>
        <taxon>Bacillati</taxon>
        <taxon>Actinomycetota</taxon>
        <taxon>Actinomycetes</taxon>
        <taxon>Micromonosporales</taxon>
        <taxon>Micromonosporaceae</taxon>
        <taxon>Salinispora</taxon>
    </lineage>
</organism>
<comment type="function">
    <text evidence="1">NDH-1 shuttles electrons from NADH, via FMN and iron-sulfur (Fe-S) centers, to quinones in the respiratory chain. The immediate electron acceptor for the enzyme in this species is believed to be a menaquinone. Couples the redox reaction to proton translocation (for every two electrons transferred, four hydrogen ions are translocated across the cytoplasmic membrane), and thus conserves the redox energy in a proton gradient.</text>
</comment>
<comment type="catalytic activity">
    <reaction evidence="1">
        <text>a quinone + NADH + 5 H(+)(in) = a quinol + NAD(+) + 4 H(+)(out)</text>
        <dbReference type="Rhea" id="RHEA:57888"/>
        <dbReference type="ChEBI" id="CHEBI:15378"/>
        <dbReference type="ChEBI" id="CHEBI:24646"/>
        <dbReference type="ChEBI" id="CHEBI:57540"/>
        <dbReference type="ChEBI" id="CHEBI:57945"/>
        <dbReference type="ChEBI" id="CHEBI:132124"/>
    </reaction>
</comment>
<comment type="subunit">
    <text evidence="1">NDH-1 is composed of 14 different subunits. Subunits NuoB, C, D, E, F, and G constitute the peripheral sector of the complex.</text>
</comment>
<comment type="subcellular location">
    <subcellularLocation>
        <location evidence="1">Cell membrane</location>
        <topology evidence="1">Peripheral membrane protein</topology>
        <orientation evidence="1">Cytoplasmic side</orientation>
    </subcellularLocation>
</comment>
<comment type="similarity">
    <text evidence="1">Belongs to the complex I 49 kDa subunit family.</text>
</comment>
<dbReference type="EC" id="7.1.1.-" evidence="1"/>
<dbReference type="EMBL" id="CP000667">
    <property type="protein sequence ID" value="ABP56714.1"/>
    <property type="molecule type" value="Genomic_DNA"/>
</dbReference>
<dbReference type="SMR" id="A4XCQ7"/>
<dbReference type="STRING" id="369723.Strop_4286"/>
<dbReference type="KEGG" id="stp:Strop_4286"/>
<dbReference type="eggNOG" id="COG0649">
    <property type="taxonomic scope" value="Bacteria"/>
</dbReference>
<dbReference type="HOGENOM" id="CLU_015134_1_2_11"/>
<dbReference type="Proteomes" id="UP000000235">
    <property type="component" value="Chromosome"/>
</dbReference>
<dbReference type="GO" id="GO:0005886">
    <property type="term" value="C:plasma membrane"/>
    <property type="evidence" value="ECO:0007669"/>
    <property type="project" value="UniProtKB-SubCell"/>
</dbReference>
<dbReference type="GO" id="GO:0051287">
    <property type="term" value="F:NAD binding"/>
    <property type="evidence" value="ECO:0007669"/>
    <property type="project" value="InterPro"/>
</dbReference>
<dbReference type="GO" id="GO:0050136">
    <property type="term" value="F:NADH:ubiquinone reductase (non-electrogenic) activity"/>
    <property type="evidence" value="ECO:0007669"/>
    <property type="project" value="UniProtKB-UniRule"/>
</dbReference>
<dbReference type="GO" id="GO:0048038">
    <property type="term" value="F:quinone binding"/>
    <property type="evidence" value="ECO:0007669"/>
    <property type="project" value="UniProtKB-KW"/>
</dbReference>
<dbReference type="Gene3D" id="1.10.645.10">
    <property type="entry name" value="Cytochrome-c3 Hydrogenase, chain B"/>
    <property type="match status" value="1"/>
</dbReference>
<dbReference type="HAMAP" id="MF_01358">
    <property type="entry name" value="NDH1_NuoD"/>
    <property type="match status" value="1"/>
</dbReference>
<dbReference type="InterPro" id="IPR001135">
    <property type="entry name" value="NADH_Q_OxRdtase_suD"/>
</dbReference>
<dbReference type="InterPro" id="IPR014029">
    <property type="entry name" value="NADH_UbQ_OxRdtase_49kDa_CS"/>
</dbReference>
<dbReference type="InterPro" id="IPR022885">
    <property type="entry name" value="NDH1_su_D/H"/>
</dbReference>
<dbReference type="InterPro" id="IPR029014">
    <property type="entry name" value="NiFe-Hase_large"/>
</dbReference>
<dbReference type="PANTHER" id="PTHR11993:SF10">
    <property type="entry name" value="NADH DEHYDROGENASE [UBIQUINONE] IRON-SULFUR PROTEIN 2, MITOCHONDRIAL"/>
    <property type="match status" value="1"/>
</dbReference>
<dbReference type="PANTHER" id="PTHR11993">
    <property type="entry name" value="NADH-UBIQUINONE OXIDOREDUCTASE 49 KDA SUBUNIT"/>
    <property type="match status" value="1"/>
</dbReference>
<dbReference type="Pfam" id="PF00346">
    <property type="entry name" value="Complex1_49kDa"/>
    <property type="match status" value="2"/>
</dbReference>
<dbReference type="SUPFAM" id="SSF56762">
    <property type="entry name" value="HydB/Nqo4-like"/>
    <property type="match status" value="1"/>
</dbReference>
<dbReference type="PROSITE" id="PS00535">
    <property type="entry name" value="COMPLEX1_49K"/>
    <property type="match status" value="1"/>
</dbReference>
<protein>
    <recommendedName>
        <fullName evidence="1">NADH-quinone oxidoreductase subunit D 2</fullName>
        <ecNumber evidence="1">7.1.1.-</ecNumber>
    </recommendedName>
    <alternativeName>
        <fullName evidence="1">NADH dehydrogenase I subunit D 2</fullName>
    </alternativeName>
    <alternativeName>
        <fullName evidence="1">NDH-1 subunit D 2</fullName>
    </alternativeName>
</protein>
<reference key="1">
    <citation type="journal article" date="2007" name="Proc. Natl. Acad. Sci. U.S.A.">
        <title>Genome sequencing reveals complex secondary metabolome in the marine actinomycete Salinispora tropica.</title>
        <authorList>
            <person name="Udwary D.W."/>
            <person name="Zeigler L."/>
            <person name="Asolkar R.N."/>
            <person name="Singan V."/>
            <person name="Lapidus A."/>
            <person name="Fenical W."/>
            <person name="Jensen P.R."/>
            <person name="Moore B.S."/>
        </authorList>
    </citation>
    <scope>NUCLEOTIDE SEQUENCE [LARGE SCALE GENOMIC DNA]</scope>
    <source>
        <strain>ATCC BAA-916 / DSM 44818 / JCM 13857 / NBRC 105044 / CNB-440</strain>
    </source>
</reference>
<feature type="chain" id="PRO_0000357926" description="NADH-quinone oxidoreductase subunit D 2">
    <location>
        <begin position="1"/>
        <end position="388"/>
    </location>
</feature>
<gene>
    <name evidence="1" type="primary">nuoD2</name>
    <name type="ordered locus">Strop_4286</name>
</gene>
<sequence length="388" mass="42776">MTGMTTDADLRELTVGTGAGGEQLGTDMVLNIGPQHPSTHGVLRLRLVLDGERVVSAEPVVGYMHRGAEKLFEVRDYRQIIVLANRHDWLSAFANELGVVLAVERLLGMEVPERATWLRMALAELNRVLNHLMFLGSYPLEIGAITPMFYAFRERETLQTALEEVSGGRIHYMFNRVGGLKEEVPAGWTGRARAAIGEVRRSLPDLDNLIRRNEIFLARTVGVGVLSAAQAAAYGASGPVARASGLDLDLRRDEPYLAYDQLDVPVVTRTAGDCHSRFEVLLDQVYVSLDLAEQCLDRVDRLTGPINTRLPKVLKAPEGHTYAWTENPLGINGYYLVSRGEKTPWRLKLRTASYANVQALATLLPGCLVPDLVAILGSMFFVVGDIDK</sequence>
<accession>A4XCQ7</accession>
<evidence type="ECO:0000255" key="1">
    <source>
        <dbReference type="HAMAP-Rule" id="MF_01358"/>
    </source>
</evidence>
<proteinExistence type="inferred from homology"/>
<keyword id="KW-1003">Cell membrane</keyword>
<keyword id="KW-0472">Membrane</keyword>
<keyword id="KW-0520">NAD</keyword>
<keyword id="KW-0874">Quinone</keyword>
<keyword id="KW-1185">Reference proteome</keyword>
<keyword id="KW-1278">Translocase</keyword>
<keyword id="KW-0813">Transport</keyword>